<gene>
    <name type="ORF">SPCC330.19c</name>
</gene>
<organism>
    <name type="scientific">Schizosaccharomyces pombe (strain 972 / ATCC 24843)</name>
    <name type="common">Fission yeast</name>
    <dbReference type="NCBI Taxonomy" id="284812"/>
    <lineage>
        <taxon>Eukaryota</taxon>
        <taxon>Fungi</taxon>
        <taxon>Dikarya</taxon>
        <taxon>Ascomycota</taxon>
        <taxon>Taphrinomycotina</taxon>
        <taxon>Schizosaccharomycetes</taxon>
        <taxon>Schizosaccharomycetales</taxon>
        <taxon>Schizosaccharomycetaceae</taxon>
        <taxon>Schizosaccharomyces</taxon>
    </lineage>
</organism>
<sequence length="90" mass="10301">MVVLNKSEAHDRSRKLELLSIRINIFGLQLNIIINLIPLVLLFAFFCPCIYFLHTFLADCEIAKSTCITSVFNCLIFHMPNLSGDWNITV</sequence>
<name>YJ8J_SCHPO</name>
<dbReference type="EMBL" id="CU329672">
    <property type="protein sequence ID" value="CAD47846.1"/>
    <property type="molecule type" value="Genomic_DNA"/>
</dbReference>
<dbReference type="RefSeq" id="XP_001713159.1">
    <property type="nucleotide sequence ID" value="XM_001713107.2"/>
</dbReference>
<dbReference type="SMR" id="Q8J1M7"/>
<dbReference type="PaxDb" id="4896-SPCC330.19c.1"/>
<dbReference type="EnsemblFungi" id="SPCC330.19c.1">
    <property type="protein sequence ID" value="SPCC330.19c.1:pep"/>
    <property type="gene ID" value="SPCC330.19c"/>
</dbReference>
<dbReference type="PomBase" id="SPCC330.19c"/>
<dbReference type="VEuPathDB" id="FungiDB:SPCC330.19c"/>
<dbReference type="HOGENOM" id="CLU_2442131_0_0_1"/>
<dbReference type="InParanoid" id="Q8J1M7"/>
<dbReference type="PRO" id="PR:Q8J1M7"/>
<dbReference type="Proteomes" id="UP000002485">
    <property type="component" value="Chromosome III"/>
</dbReference>
<dbReference type="GO" id="GO:0016020">
    <property type="term" value="C:membrane"/>
    <property type="evidence" value="ECO:0007669"/>
    <property type="project" value="UniProtKB-SubCell"/>
</dbReference>
<comment type="subcellular location">
    <subcellularLocation>
        <location evidence="2">Membrane</location>
        <topology evidence="2">Single-pass membrane protein</topology>
    </subcellularLocation>
</comment>
<feature type="chain" id="PRO_0000116809" description="Uncharacterized protein C330.19c">
    <location>
        <begin position="1"/>
        <end position="90"/>
    </location>
</feature>
<feature type="transmembrane region" description="Helical" evidence="1">
    <location>
        <begin position="32"/>
        <end position="52"/>
    </location>
</feature>
<accession>Q8J1M7</accession>
<reference key="1">
    <citation type="journal article" date="2002" name="Nature">
        <title>The genome sequence of Schizosaccharomyces pombe.</title>
        <authorList>
            <person name="Wood V."/>
            <person name="Gwilliam R."/>
            <person name="Rajandream M.A."/>
            <person name="Lyne M.H."/>
            <person name="Lyne R."/>
            <person name="Stewart A."/>
            <person name="Sgouros J.G."/>
            <person name="Peat N."/>
            <person name="Hayles J."/>
            <person name="Baker S.G."/>
            <person name="Basham D."/>
            <person name="Bowman S."/>
            <person name="Brooks K."/>
            <person name="Brown D."/>
            <person name="Brown S."/>
            <person name="Chillingworth T."/>
            <person name="Churcher C.M."/>
            <person name="Collins M."/>
            <person name="Connor R."/>
            <person name="Cronin A."/>
            <person name="Davis P."/>
            <person name="Feltwell T."/>
            <person name="Fraser A."/>
            <person name="Gentles S."/>
            <person name="Goble A."/>
            <person name="Hamlin N."/>
            <person name="Harris D.E."/>
            <person name="Hidalgo J."/>
            <person name="Hodgson G."/>
            <person name="Holroyd S."/>
            <person name="Hornsby T."/>
            <person name="Howarth S."/>
            <person name="Huckle E.J."/>
            <person name="Hunt S."/>
            <person name="Jagels K."/>
            <person name="James K.D."/>
            <person name="Jones L."/>
            <person name="Jones M."/>
            <person name="Leather S."/>
            <person name="McDonald S."/>
            <person name="McLean J."/>
            <person name="Mooney P."/>
            <person name="Moule S."/>
            <person name="Mungall K.L."/>
            <person name="Murphy L.D."/>
            <person name="Niblett D."/>
            <person name="Odell C."/>
            <person name="Oliver K."/>
            <person name="O'Neil S."/>
            <person name="Pearson D."/>
            <person name="Quail M.A."/>
            <person name="Rabbinowitsch E."/>
            <person name="Rutherford K.M."/>
            <person name="Rutter S."/>
            <person name="Saunders D."/>
            <person name="Seeger K."/>
            <person name="Sharp S."/>
            <person name="Skelton J."/>
            <person name="Simmonds M.N."/>
            <person name="Squares R."/>
            <person name="Squares S."/>
            <person name="Stevens K."/>
            <person name="Taylor K."/>
            <person name="Taylor R.G."/>
            <person name="Tivey A."/>
            <person name="Walsh S.V."/>
            <person name="Warren T."/>
            <person name="Whitehead S."/>
            <person name="Woodward J.R."/>
            <person name="Volckaert G."/>
            <person name="Aert R."/>
            <person name="Robben J."/>
            <person name="Grymonprez B."/>
            <person name="Weltjens I."/>
            <person name="Vanstreels E."/>
            <person name="Rieger M."/>
            <person name="Schaefer M."/>
            <person name="Mueller-Auer S."/>
            <person name="Gabel C."/>
            <person name="Fuchs M."/>
            <person name="Duesterhoeft A."/>
            <person name="Fritzc C."/>
            <person name="Holzer E."/>
            <person name="Moestl D."/>
            <person name="Hilbert H."/>
            <person name="Borzym K."/>
            <person name="Langer I."/>
            <person name="Beck A."/>
            <person name="Lehrach H."/>
            <person name="Reinhardt R."/>
            <person name="Pohl T.M."/>
            <person name="Eger P."/>
            <person name="Zimmermann W."/>
            <person name="Wedler H."/>
            <person name="Wambutt R."/>
            <person name="Purnelle B."/>
            <person name="Goffeau A."/>
            <person name="Cadieu E."/>
            <person name="Dreano S."/>
            <person name="Gloux S."/>
            <person name="Lelaure V."/>
            <person name="Mottier S."/>
            <person name="Galibert F."/>
            <person name="Aves S.J."/>
            <person name="Xiang Z."/>
            <person name="Hunt C."/>
            <person name="Moore K."/>
            <person name="Hurst S.M."/>
            <person name="Lucas M."/>
            <person name="Rochet M."/>
            <person name="Gaillardin C."/>
            <person name="Tallada V.A."/>
            <person name="Garzon A."/>
            <person name="Thode G."/>
            <person name="Daga R.R."/>
            <person name="Cruzado L."/>
            <person name="Jimenez J."/>
            <person name="Sanchez M."/>
            <person name="del Rey F."/>
            <person name="Benito J."/>
            <person name="Dominguez A."/>
            <person name="Revuelta J.L."/>
            <person name="Moreno S."/>
            <person name="Armstrong J."/>
            <person name="Forsburg S.L."/>
            <person name="Cerutti L."/>
            <person name="Lowe T."/>
            <person name="McCombie W.R."/>
            <person name="Paulsen I."/>
            <person name="Potashkin J."/>
            <person name="Shpakovski G.V."/>
            <person name="Ussery D."/>
            <person name="Barrell B.G."/>
            <person name="Nurse P."/>
        </authorList>
    </citation>
    <scope>NUCLEOTIDE SEQUENCE [LARGE SCALE GENOMIC DNA]</scope>
    <source>
        <strain>972 / ATCC 24843</strain>
    </source>
</reference>
<keyword id="KW-0472">Membrane</keyword>
<keyword id="KW-1185">Reference proteome</keyword>
<keyword id="KW-0812">Transmembrane</keyword>
<keyword id="KW-1133">Transmembrane helix</keyword>
<proteinExistence type="predicted"/>
<protein>
    <recommendedName>
        <fullName>Uncharacterized protein C330.19c</fullName>
    </recommendedName>
</protein>
<evidence type="ECO:0000255" key="1"/>
<evidence type="ECO:0000305" key="2"/>